<comment type="function">
    <text evidence="1">Is required not only for elongation of protein synthesis but also for the initiation of all mRNA translation through initiator tRNA(fMet) aminoacylation.</text>
</comment>
<comment type="catalytic activity">
    <reaction evidence="1">
        <text>tRNA(Met) + L-methionine + ATP = L-methionyl-tRNA(Met) + AMP + diphosphate</text>
        <dbReference type="Rhea" id="RHEA:13481"/>
        <dbReference type="Rhea" id="RHEA-COMP:9667"/>
        <dbReference type="Rhea" id="RHEA-COMP:9698"/>
        <dbReference type="ChEBI" id="CHEBI:30616"/>
        <dbReference type="ChEBI" id="CHEBI:33019"/>
        <dbReference type="ChEBI" id="CHEBI:57844"/>
        <dbReference type="ChEBI" id="CHEBI:78442"/>
        <dbReference type="ChEBI" id="CHEBI:78530"/>
        <dbReference type="ChEBI" id="CHEBI:456215"/>
        <dbReference type="EC" id="6.1.1.10"/>
    </reaction>
</comment>
<comment type="cofactor">
    <cofactor evidence="1">
        <name>Zn(2+)</name>
        <dbReference type="ChEBI" id="CHEBI:29105"/>
    </cofactor>
    <text evidence="1">Binds 1 zinc ion per subunit.</text>
</comment>
<comment type="subunit">
    <text evidence="1">Homodimer.</text>
</comment>
<comment type="subcellular location">
    <subcellularLocation>
        <location evidence="1">Cytoplasm</location>
    </subcellularLocation>
</comment>
<comment type="similarity">
    <text evidence="1">Belongs to the class-I aminoacyl-tRNA synthetase family. MetG type 1 subfamily.</text>
</comment>
<comment type="sequence caution" evidence="2">
    <conflict type="erroneous initiation">
        <sequence resource="EMBL-CDS" id="ABX72261"/>
    </conflict>
</comment>
<feature type="chain" id="PRO_0000331853" description="Methionine--tRNA ligase">
    <location>
        <begin position="1"/>
        <end position="685"/>
    </location>
</feature>
<feature type="domain" description="tRNA-binding" evidence="1">
    <location>
        <begin position="582"/>
        <end position="685"/>
    </location>
</feature>
<feature type="short sequence motif" description="'HIGH' region">
    <location>
        <begin position="12"/>
        <end position="22"/>
    </location>
</feature>
<feature type="short sequence motif" description="'KMSKS' region">
    <location>
        <begin position="339"/>
        <end position="343"/>
    </location>
</feature>
<feature type="binding site" evidence="1">
    <location>
        <position position="143"/>
    </location>
    <ligand>
        <name>Zn(2+)</name>
        <dbReference type="ChEBI" id="CHEBI:29105"/>
    </ligand>
</feature>
<feature type="binding site" evidence="1">
    <location>
        <position position="146"/>
    </location>
    <ligand>
        <name>Zn(2+)</name>
        <dbReference type="ChEBI" id="CHEBI:29105"/>
    </ligand>
</feature>
<feature type="binding site" evidence="1">
    <location>
        <position position="156"/>
    </location>
    <ligand>
        <name>Zn(2+)</name>
        <dbReference type="ChEBI" id="CHEBI:29105"/>
    </ligand>
</feature>
<feature type="binding site" evidence="1">
    <location>
        <position position="159"/>
    </location>
    <ligand>
        <name>Zn(2+)</name>
        <dbReference type="ChEBI" id="CHEBI:29105"/>
    </ligand>
</feature>
<feature type="binding site" evidence="1">
    <location>
        <position position="342"/>
    </location>
    <ligand>
        <name>ATP</name>
        <dbReference type="ChEBI" id="CHEBI:30616"/>
    </ligand>
</feature>
<protein>
    <recommendedName>
        <fullName evidence="1">Methionine--tRNA ligase</fullName>
        <ecNumber evidence="1">6.1.1.10</ecNumber>
    </recommendedName>
    <alternativeName>
        <fullName evidence="1">Methionyl-tRNA synthetase</fullName>
        <shortName evidence="1">MetRS</shortName>
    </alternativeName>
</protein>
<name>SYM_NEIM0</name>
<proteinExistence type="inferred from homology"/>
<sequence>MTRKILVTSALPYANGSIHLGHMVEHIQTDVWVRFQKLRGNECHYCCADDTHGTPVMLAAQKQGIAPEDMIAKVREEHLADFTGFFIGYDNYYSTHSPENKQFSQDIYRALKANGKIESRVIEQLFDPEKQMFLPDRFVKGECPKCHAQDQYGDNCEVCGTTYSPTELINPYSAVSGAKPELRESEHFFFKLGECADFLKAWTSGNNPHDGKPHLQAEALNKMKEWLGEGEETTLSDWDISRDAPYFGFEIPDAPGKYFYVWLDAPVGYMASFKNLCDRIGVDFDEYFKAGSQTEMYHFIGKDILYFHALFWPAMLHFSGHRAPTGVYAHGFLTVDGQKMSKSRGTFITAKSYLEQGLNPEWMRYYIAAKLNSKIEDIDLNLQDFISRVNSDLVGKYVNIAARASGFIAKRFEGRLKDVADSALLAKLAAESDTIAEQYENREYARALRDIMALADAVNEYVDANKPWELAKQEGQDERLHEVCSELINAFTMLTAYLAPVLPQTAANAAKFLNLEAITWANTRETLGKHAINKYKHLMQRVEQKQVDDLIEANKQSIAAAAAPAAEESKYEKVAEQASFDDFMKIDMRVAKVLNCEAVEGSTKLLKFDLDFGFEQRIIFSGIAASYLNPAELNGRMVIAVANFAPRKMAKFGVSEGMILSAATADGKLKLLDVDAGAQPGDKVG</sequence>
<evidence type="ECO:0000255" key="1">
    <source>
        <dbReference type="HAMAP-Rule" id="MF_00098"/>
    </source>
</evidence>
<evidence type="ECO:0000305" key="2"/>
<accession>A9LZS9</accession>
<gene>
    <name evidence="1" type="primary">metG</name>
    <name type="ordered locus">NMCC_0031</name>
</gene>
<organism>
    <name type="scientific">Neisseria meningitidis serogroup C (strain 053442)</name>
    <dbReference type="NCBI Taxonomy" id="374833"/>
    <lineage>
        <taxon>Bacteria</taxon>
        <taxon>Pseudomonadati</taxon>
        <taxon>Pseudomonadota</taxon>
        <taxon>Betaproteobacteria</taxon>
        <taxon>Neisseriales</taxon>
        <taxon>Neisseriaceae</taxon>
        <taxon>Neisseria</taxon>
    </lineage>
</organism>
<keyword id="KW-0030">Aminoacyl-tRNA synthetase</keyword>
<keyword id="KW-0067">ATP-binding</keyword>
<keyword id="KW-0963">Cytoplasm</keyword>
<keyword id="KW-0436">Ligase</keyword>
<keyword id="KW-0479">Metal-binding</keyword>
<keyword id="KW-0547">Nucleotide-binding</keyword>
<keyword id="KW-0648">Protein biosynthesis</keyword>
<keyword id="KW-0694">RNA-binding</keyword>
<keyword id="KW-0820">tRNA-binding</keyword>
<keyword id="KW-0862">Zinc</keyword>
<dbReference type="EC" id="6.1.1.10" evidence="1"/>
<dbReference type="EMBL" id="CP000381">
    <property type="protein sequence ID" value="ABX72261.1"/>
    <property type="status" value="ALT_INIT"/>
    <property type="molecule type" value="Genomic_DNA"/>
</dbReference>
<dbReference type="RefSeq" id="WP_025455716.1">
    <property type="nucleotide sequence ID" value="NC_010120.1"/>
</dbReference>
<dbReference type="SMR" id="A9LZS9"/>
<dbReference type="KEGG" id="nmn:NMCC_0031"/>
<dbReference type="HOGENOM" id="CLU_009710_7_0_4"/>
<dbReference type="Proteomes" id="UP000001177">
    <property type="component" value="Chromosome"/>
</dbReference>
<dbReference type="GO" id="GO:0005829">
    <property type="term" value="C:cytosol"/>
    <property type="evidence" value="ECO:0007669"/>
    <property type="project" value="TreeGrafter"/>
</dbReference>
<dbReference type="GO" id="GO:0005524">
    <property type="term" value="F:ATP binding"/>
    <property type="evidence" value="ECO:0007669"/>
    <property type="project" value="UniProtKB-UniRule"/>
</dbReference>
<dbReference type="GO" id="GO:0046872">
    <property type="term" value="F:metal ion binding"/>
    <property type="evidence" value="ECO:0007669"/>
    <property type="project" value="UniProtKB-KW"/>
</dbReference>
<dbReference type="GO" id="GO:0004825">
    <property type="term" value="F:methionine-tRNA ligase activity"/>
    <property type="evidence" value="ECO:0007669"/>
    <property type="project" value="UniProtKB-UniRule"/>
</dbReference>
<dbReference type="GO" id="GO:0000049">
    <property type="term" value="F:tRNA binding"/>
    <property type="evidence" value="ECO:0007669"/>
    <property type="project" value="UniProtKB-KW"/>
</dbReference>
<dbReference type="GO" id="GO:0006431">
    <property type="term" value="P:methionyl-tRNA aminoacylation"/>
    <property type="evidence" value="ECO:0007669"/>
    <property type="project" value="UniProtKB-UniRule"/>
</dbReference>
<dbReference type="CDD" id="cd07957">
    <property type="entry name" value="Anticodon_Ia_Met"/>
    <property type="match status" value="1"/>
</dbReference>
<dbReference type="CDD" id="cd00814">
    <property type="entry name" value="MetRS_core"/>
    <property type="match status" value="1"/>
</dbReference>
<dbReference type="CDD" id="cd02800">
    <property type="entry name" value="tRNA_bind_EcMetRS_like"/>
    <property type="match status" value="1"/>
</dbReference>
<dbReference type="FunFam" id="1.10.730.10:FF:000005">
    <property type="entry name" value="Methionine--tRNA ligase"/>
    <property type="match status" value="1"/>
</dbReference>
<dbReference type="FunFam" id="2.20.28.20:FF:000001">
    <property type="entry name" value="Methionine--tRNA ligase"/>
    <property type="match status" value="1"/>
</dbReference>
<dbReference type="FunFam" id="2.40.50.140:FF:000042">
    <property type="entry name" value="Methionine--tRNA ligase"/>
    <property type="match status" value="1"/>
</dbReference>
<dbReference type="Gene3D" id="3.40.50.620">
    <property type="entry name" value="HUPs"/>
    <property type="match status" value="1"/>
</dbReference>
<dbReference type="Gene3D" id="1.10.730.10">
    <property type="entry name" value="Isoleucyl-tRNA Synthetase, Domain 1"/>
    <property type="match status" value="1"/>
</dbReference>
<dbReference type="Gene3D" id="2.20.28.20">
    <property type="entry name" value="Methionyl-tRNA synthetase, Zn-domain"/>
    <property type="match status" value="1"/>
</dbReference>
<dbReference type="Gene3D" id="2.40.50.140">
    <property type="entry name" value="Nucleic acid-binding proteins"/>
    <property type="match status" value="1"/>
</dbReference>
<dbReference type="HAMAP" id="MF_00098">
    <property type="entry name" value="Met_tRNA_synth_type1"/>
    <property type="match status" value="1"/>
</dbReference>
<dbReference type="InterPro" id="IPR001412">
    <property type="entry name" value="aa-tRNA-synth_I_CS"/>
</dbReference>
<dbReference type="InterPro" id="IPR041872">
    <property type="entry name" value="Anticodon_Met"/>
</dbReference>
<dbReference type="InterPro" id="IPR004495">
    <property type="entry name" value="Met-tRNA-synth_bsu_C"/>
</dbReference>
<dbReference type="InterPro" id="IPR023458">
    <property type="entry name" value="Met-tRNA_ligase_1"/>
</dbReference>
<dbReference type="InterPro" id="IPR014758">
    <property type="entry name" value="Met-tRNA_synth"/>
</dbReference>
<dbReference type="InterPro" id="IPR015413">
    <property type="entry name" value="Methionyl/Leucyl_tRNA_Synth"/>
</dbReference>
<dbReference type="InterPro" id="IPR033911">
    <property type="entry name" value="MetRS_core"/>
</dbReference>
<dbReference type="InterPro" id="IPR029038">
    <property type="entry name" value="MetRS_Zn"/>
</dbReference>
<dbReference type="InterPro" id="IPR012340">
    <property type="entry name" value="NA-bd_OB-fold"/>
</dbReference>
<dbReference type="InterPro" id="IPR014729">
    <property type="entry name" value="Rossmann-like_a/b/a_fold"/>
</dbReference>
<dbReference type="InterPro" id="IPR002547">
    <property type="entry name" value="tRNA-bd_dom"/>
</dbReference>
<dbReference type="InterPro" id="IPR009080">
    <property type="entry name" value="tRNAsynth_Ia_anticodon-bd"/>
</dbReference>
<dbReference type="NCBIfam" id="TIGR00398">
    <property type="entry name" value="metG"/>
    <property type="match status" value="1"/>
</dbReference>
<dbReference type="NCBIfam" id="TIGR00399">
    <property type="entry name" value="metG_C_term"/>
    <property type="match status" value="1"/>
</dbReference>
<dbReference type="NCBIfam" id="NF001100">
    <property type="entry name" value="PRK00133.1"/>
    <property type="match status" value="1"/>
</dbReference>
<dbReference type="PANTHER" id="PTHR45765">
    <property type="entry name" value="METHIONINE--TRNA LIGASE"/>
    <property type="match status" value="1"/>
</dbReference>
<dbReference type="PANTHER" id="PTHR45765:SF1">
    <property type="entry name" value="METHIONINE--TRNA LIGASE, CYTOPLASMIC"/>
    <property type="match status" value="1"/>
</dbReference>
<dbReference type="Pfam" id="PF19303">
    <property type="entry name" value="Anticodon_3"/>
    <property type="match status" value="1"/>
</dbReference>
<dbReference type="Pfam" id="PF09334">
    <property type="entry name" value="tRNA-synt_1g"/>
    <property type="match status" value="1"/>
</dbReference>
<dbReference type="Pfam" id="PF01588">
    <property type="entry name" value="tRNA_bind"/>
    <property type="match status" value="1"/>
</dbReference>
<dbReference type="PRINTS" id="PR01041">
    <property type="entry name" value="TRNASYNTHMET"/>
</dbReference>
<dbReference type="SUPFAM" id="SSF47323">
    <property type="entry name" value="Anticodon-binding domain of a subclass of class I aminoacyl-tRNA synthetases"/>
    <property type="match status" value="1"/>
</dbReference>
<dbReference type="SUPFAM" id="SSF57770">
    <property type="entry name" value="Methionyl-tRNA synthetase (MetRS), Zn-domain"/>
    <property type="match status" value="1"/>
</dbReference>
<dbReference type="SUPFAM" id="SSF50249">
    <property type="entry name" value="Nucleic acid-binding proteins"/>
    <property type="match status" value="1"/>
</dbReference>
<dbReference type="SUPFAM" id="SSF52374">
    <property type="entry name" value="Nucleotidylyl transferase"/>
    <property type="match status" value="1"/>
</dbReference>
<dbReference type="PROSITE" id="PS00178">
    <property type="entry name" value="AA_TRNA_LIGASE_I"/>
    <property type="match status" value="1"/>
</dbReference>
<dbReference type="PROSITE" id="PS50886">
    <property type="entry name" value="TRBD"/>
    <property type="match status" value="1"/>
</dbReference>
<reference key="1">
    <citation type="journal article" date="2008" name="Genomics">
        <title>Characterization of ST-4821 complex, a unique Neisseria meningitidis clone.</title>
        <authorList>
            <person name="Peng J."/>
            <person name="Yang L."/>
            <person name="Yang F."/>
            <person name="Yang J."/>
            <person name="Yan Y."/>
            <person name="Nie H."/>
            <person name="Zhang X."/>
            <person name="Xiong Z."/>
            <person name="Jiang Y."/>
            <person name="Cheng F."/>
            <person name="Xu X."/>
            <person name="Chen S."/>
            <person name="Sun L."/>
            <person name="Li W."/>
            <person name="Shen Y."/>
            <person name="Shao Z."/>
            <person name="Liang X."/>
            <person name="Xu J."/>
            <person name="Jin Q."/>
        </authorList>
    </citation>
    <scope>NUCLEOTIDE SEQUENCE [LARGE SCALE GENOMIC DNA]</scope>
    <source>
        <strain>053442</strain>
    </source>
</reference>